<dbReference type="EMBL" id="AE005176">
    <property type="protein sequence ID" value="AAK05357.1"/>
    <property type="molecule type" value="Genomic_DNA"/>
</dbReference>
<dbReference type="PIR" id="C86782">
    <property type="entry name" value="C86782"/>
</dbReference>
<dbReference type="RefSeq" id="NP_267415.1">
    <property type="nucleotide sequence ID" value="NC_002662.1"/>
</dbReference>
<dbReference type="RefSeq" id="WP_003130226.1">
    <property type="nucleotide sequence ID" value="NC_002662.1"/>
</dbReference>
<dbReference type="SMR" id="Q9CG51"/>
<dbReference type="PaxDb" id="272623-L90005"/>
<dbReference type="EnsemblBacteria" id="AAK05357">
    <property type="protein sequence ID" value="AAK05357"/>
    <property type="gene ID" value="L90005"/>
</dbReference>
<dbReference type="GeneID" id="89633464"/>
<dbReference type="KEGG" id="lla:L90005"/>
<dbReference type="PATRIC" id="fig|272623.7.peg.1360"/>
<dbReference type="eggNOG" id="COG0236">
    <property type="taxonomic scope" value="Bacteria"/>
</dbReference>
<dbReference type="HOGENOM" id="CLU_108696_19_0_9"/>
<dbReference type="OrthoDB" id="6462171at2"/>
<dbReference type="UniPathway" id="UPA00556"/>
<dbReference type="Proteomes" id="UP000002196">
    <property type="component" value="Chromosome"/>
</dbReference>
<dbReference type="GO" id="GO:0005737">
    <property type="term" value="C:cytoplasm"/>
    <property type="evidence" value="ECO:0007669"/>
    <property type="project" value="UniProtKB-SubCell"/>
</dbReference>
<dbReference type="GO" id="GO:0036370">
    <property type="term" value="F:D-alanyl carrier activity"/>
    <property type="evidence" value="ECO:0007669"/>
    <property type="project" value="UniProtKB-UniRule"/>
</dbReference>
<dbReference type="GO" id="GO:0071555">
    <property type="term" value="P:cell wall organization"/>
    <property type="evidence" value="ECO:0007669"/>
    <property type="project" value="UniProtKB-KW"/>
</dbReference>
<dbReference type="GO" id="GO:0070395">
    <property type="term" value="P:lipoteichoic acid biosynthetic process"/>
    <property type="evidence" value="ECO:0007669"/>
    <property type="project" value="UniProtKB-UniRule"/>
</dbReference>
<dbReference type="Gene3D" id="1.10.1200.10">
    <property type="entry name" value="ACP-like"/>
    <property type="match status" value="1"/>
</dbReference>
<dbReference type="HAMAP" id="MF_00565">
    <property type="entry name" value="DltC"/>
    <property type="match status" value="1"/>
</dbReference>
<dbReference type="InterPro" id="IPR036736">
    <property type="entry name" value="ACP-like_sf"/>
</dbReference>
<dbReference type="InterPro" id="IPR003230">
    <property type="entry name" value="DltC"/>
</dbReference>
<dbReference type="InterPro" id="IPR009081">
    <property type="entry name" value="PP-bd_ACP"/>
</dbReference>
<dbReference type="NCBIfam" id="TIGR01688">
    <property type="entry name" value="dltC"/>
    <property type="match status" value="1"/>
</dbReference>
<dbReference type="NCBIfam" id="NF003464">
    <property type="entry name" value="PRK05087.1"/>
    <property type="match status" value="1"/>
</dbReference>
<dbReference type="Pfam" id="PF00550">
    <property type="entry name" value="PP-binding"/>
    <property type="match status" value="1"/>
</dbReference>
<dbReference type="SUPFAM" id="SSF47336">
    <property type="entry name" value="ACP-like"/>
    <property type="match status" value="1"/>
</dbReference>
<dbReference type="PROSITE" id="PS50075">
    <property type="entry name" value="CARRIER"/>
    <property type="match status" value="1"/>
</dbReference>
<comment type="function">
    <text evidence="1">Carrier protein involved in the D-alanylation of lipoteichoic acid (LTA). The loading of thioester-linked D-alanine onto DltC is catalyzed by D-alanine--D-alanyl carrier protein ligase DltA. The DltC-carried D-alanyl group is further transferred to cell membrane phosphatidylglycerol (PG) by forming an ester bond, probably catalyzed by DltD. D-alanylation of LTA plays an important role in modulating the properties of the cell wall in Gram-positive bacteria, influencing the net charge of the cell wall.</text>
</comment>
<comment type="pathway">
    <text evidence="1">Cell wall biogenesis; lipoteichoic acid biosynthesis.</text>
</comment>
<comment type="subcellular location">
    <subcellularLocation>
        <location evidence="1">Cytoplasm</location>
    </subcellularLocation>
</comment>
<comment type="PTM">
    <text evidence="1">4'-phosphopantetheine is transferred from CoA to a specific serine of apo-DCP.</text>
</comment>
<comment type="similarity">
    <text evidence="1">Belongs to the DltC family.</text>
</comment>
<keyword id="KW-0961">Cell wall biogenesis/degradation</keyword>
<keyword id="KW-0963">Cytoplasm</keyword>
<keyword id="KW-0596">Phosphopantetheine</keyword>
<keyword id="KW-0597">Phosphoprotein</keyword>
<keyword id="KW-1185">Reference proteome</keyword>
<name>DLTC_LACLA</name>
<evidence type="ECO:0000255" key="1">
    <source>
        <dbReference type="HAMAP-Rule" id="MF_00565"/>
    </source>
</evidence>
<feature type="chain" id="PRO_0000213090" description="D-alanyl carrier protein">
    <location>
        <begin position="1"/>
        <end position="79"/>
    </location>
</feature>
<feature type="domain" description="Carrier" evidence="1">
    <location>
        <begin position="1"/>
        <end position="76"/>
    </location>
</feature>
<feature type="modified residue" description="O-(pantetheine 4'-phosphoryl)serine" evidence="1">
    <location>
        <position position="34"/>
    </location>
</feature>
<gene>
    <name evidence="1" type="primary">dltC</name>
    <name type="ordered locus">LL1259</name>
    <name type="ORF">L90005</name>
</gene>
<sequence>MKEQIFDIIETVSGTDEFREDLDMDLFEEGILDSMRAIMLIVELEGAFDISLPPSEMDREDWNTANKIAARVQEKKDEN</sequence>
<accession>Q9CG51</accession>
<proteinExistence type="inferred from homology"/>
<reference key="1">
    <citation type="journal article" date="2001" name="Genome Res.">
        <title>The complete genome sequence of the lactic acid bacterium Lactococcus lactis ssp. lactis IL1403.</title>
        <authorList>
            <person name="Bolotin A."/>
            <person name="Wincker P."/>
            <person name="Mauger S."/>
            <person name="Jaillon O."/>
            <person name="Malarme K."/>
            <person name="Weissenbach J."/>
            <person name="Ehrlich S.D."/>
            <person name="Sorokin A."/>
        </authorList>
    </citation>
    <scope>NUCLEOTIDE SEQUENCE [LARGE SCALE GENOMIC DNA]</scope>
    <source>
        <strain>IL1403</strain>
    </source>
</reference>
<protein>
    <recommendedName>
        <fullName evidence="1">D-alanyl carrier protein</fullName>
        <shortName evidence="1">DCP</shortName>
    </recommendedName>
    <alternativeName>
        <fullName evidence="1">D-alanine--poly(phosphoribitol) ligase subunit 2</fullName>
    </alternativeName>
</protein>
<organism>
    <name type="scientific">Lactococcus lactis subsp. lactis (strain IL1403)</name>
    <name type="common">Streptococcus lactis</name>
    <dbReference type="NCBI Taxonomy" id="272623"/>
    <lineage>
        <taxon>Bacteria</taxon>
        <taxon>Bacillati</taxon>
        <taxon>Bacillota</taxon>
        <taxon>Bacilli</taxon>
        <taxon>Lactobacillales</taxon>
        <taxon>Streptococcaceae</taxon>
        <taxon>Lactococcus</taxon>
    </lineage>
</organism>